<feature type="chain" id="PRO_1000073993" description="Dihydroxy-acid dehydratase">
    <location>
        <begin position="1"/>
        <end position="562"/>
    </location>
</feature>
<feature type="active site" description="Proton acceptor" evidence="1">
    <location>
        <position position="472"/>
    </location>
</feature>
<feature type="binding site" evidence="1">
    <location>
        <position position="80"/>
    </location>
    <ligand>
        <name>Mg(2+)</name>
        <dbReference type="ChEBI" id="CHEBI:18420"/>
    </ligand>
</feature>
<feature type="binding site" evidence="1">
    <location>
        <position position="121"/>
    </location>
    <ligand>
        <name>[2Fe-2S] cluster</name>
        <dbReference type="ChEBI" id="CHEBI:190135"/>
    </ligand>
</feature>
<feature type="binding site" evidence="1">
    <location>
        <position position="122"/>
    </location>
    <ligand>
        <name>Mg(2+)</name>
        <dbReference type="ChEBI" id="CHEBI:18420"/>
    </ligand>
</feature>
<feature type="binding site" description="via carbamate group" evidence="1">
    <location>
        <position position="123"/>
    </location>
    <ligand>
        <name>Mg(2+)</name>
        <dbReference type="ChEBI" id="CHEBI:18420"/>
    </ligand>
</feature>
<feature type="binding site" evidence="1">
    <location>
        <position position="194"/>
    </location>
    <ligand>
        <name>[2Fe-2S] cluster</name>
        <dbReference type="ChEBI" id="CHEBI:190135"/>
    </ligand>
</feature>
<feature type="binding site" evidence="1">
    <location>
        <position position="446"/>
    </location>
    <ligand>
        <name>Mg(2+)</name>
        <dbReference type="ChEBI" id="CHEBI:18420"/>
    </ligand>
</feature>
<feature type="modified residue" description="N6-carboxylysine" evidence="1">
    <location>
        <position position="123"/>
    </location>
</feature>
<organism>
    <name type="scientific">Staphylococcus aureus (strain JH9)</name>
    <dbReference type="NCBI Taxonomy" id="359786"/>
    <lineage>
        <taxon>Bacteria</taxon>
        <taxon>Bacillati</taxon>
        <taxon>Bacillota</taxon>
        <taxon>Bacilli</taxon>
        <taxon>Bacillales</taxon>
        <taxon>Staphylococcaceae</taxon>
        <taxon>Staphylococcus</taxon>
    </lineage>
</organism>
<comment type="function">
    <text evidence="1">Functions in the biosynthesis of branched-chain amino acids. Catalyzes the dehydration of (2R,3R)-2,3-dihydroxy-3-methylpentanoate (2,3-dihydroxy-3-methylvalerate) into 2-oxo-3-methylpentanoate (2-oxo-3-methylvalerate) and of (2R)-2,3-dihydroxy-3-methylbutanoate (2,3-dihydroxyisovalerate) into 2-oxo-3-methylbutanoate (2-oxoisovalerate), the penultimate precursor to L-isoleucine and L-valine, respectively.</text>
</comment>
<comment type="catalytic activity">
    <reaction evidence="1">
        <text>(2R)-2,3-dihydroxy-3-methylbutanoate = 3-methyl-2-oxobutanoate + H2O</text>
        <dbReference type="Rhea" id="RHEA:24809"/>
        <dbReference type="ChEBI" id="CHEBI:11851"/>
        <dbReference type="ChEBI" id="CHEBI:15377"/>
        <dbReference type="ChEBI" id="CHEBI:49072"/>
        <dbReference type="EC" id="4.2.1.9"/>
    </reaction>
    <physiologicalReaction direction="left-to-right" evidence="1">
        <dbReference type="Rhea" id="RHEA:24810"/>
    </physiologicalReaction>
</comment>
<comment type="catalytic activity">
    <reaction evidence="1">
        <text>(2R,3R)-2,3-dihydroxy-3-methylpentanoate = (S)-3-methyl-2-oxopentanoate + H2O</text>
        <dbReference type="Rhea" id="RHEA:27694"/>
        <dbReference type="ChEBI" id="CHEBI:15377"/>
        <dbReference type="ChEBI" id="CHEBI:35146"/>
        <dbReference type="ChEBI" id="CHEBI:49258"/>
        <dbReference type="EC" id="4.2.1.9"/>
    </reaction>
    <physiologicalReaction direction="left-to-right" evidence="1">
        <dbReference type="Rhea" id="RHEA:27695"/>
    </physiologicalReaction>
</comment>
<comment type="cofactor">
    <cofactor evidence="1">
        <name>[2Fe-2S] cluster</name>
        <dbReference type="ChEBI" id="CHEBI:190135"/>
    </cofactor>
    <text evidence="1">Binds 1 [2Fe-2S] cluster per subunit. This cluster acts as a Lewis acid cofactor.</text>
</comment>
<comment type="cofactor">
    <cofactor evidence="1">
        <name>Mg(2+)</name>
        <dbReference type="ChEBI" id="CHEBI:18420"/>
    </cofactor>
</comment>
<comment type="pathway">
    <text evidence="1">Amino-acid biosynthesis; L-isoleucine biosynthesis; L-isoleucine from 2-oxobutanoate: step 3/4.</text>
</comment>
<comment type="pathway">
    <text evidence="1">Amino-acid biosynthesis; L-valine biosynthesis; L-valine from pyruvate: step 3/4.</text>
</comment>
<comment type="subunit">
    <text evidence="1">Homodimer.</text>
</comment>
<comment type="similarity">
    <text evidence="1">Belongs to the IlvD/Edd family.</text>
</comment>
<gene>
    <name evidence="1" type="primary">ilvD</name>
    <name type="ordered locus">SaurJH9_2090</name>
</gene>
<keyword id="KW-0001">2Fe-2S</keyword>
<keyword id="KW-0028">Amino-acid biosynthesis</keyword>
<keyword id="KW-0100">Branched-chain amino acid biosynthesis</keyword>
<keyword id="KW-0408">Iron</keyword>
<keyword id="KW-0411">Iron-sulfur</keyword>
<keyword id="KW-0456">Lyase</keyword>
<keyword id="KW-0460">Magnesium</keyword>
<keyword id="KW-0479">Metal-binding</keyword>
<protein>
    <recommendedName>
        <fullName evidence="1">Dihydroxy-acid dehydratase</fullName>
        <shortName evidence="1">DAD</shortName>
        <ecNumber evidence="1">4.2.1.9</ecNumber>
    </recommendedName>
</protein>
<dbReference type="EC" id="4.2.1.9" evidence="1"/>
<dbReference type="EMBL" id="CP000703">
    <property type="protein sequence ID" value="ABQ49872.1"/>
    <property type="molecule type" value="Genomic_DNA"/>
</dbReference>
<dbReference type="RefSeq" id="WP_001255780.1">
    <property type="nucleotide sequence ID" value="NC_009487.1"/>
</dbReference>
<dbReference type="SMR" id="A5IUJ9"/>
<dbReference type="KEGG" id="saj:SaurJH9_2090"/>
<dbReference type="HOGENOM" id="CLU_014271_4_2_9"/>
<dbReference type="UniPathway" id="UPA00047">
    <property type="reaction ID" value="UER00057"/>
</dbReference>
<dbReference type="UniPathway" id="UPA00049">
    <property type="reaction ID" value="UER00061"/>
</dbReference>
<dbReference type="GO" id="GO:0005829">
    <property type="term" value="C:cytosol"/>
    <property type="evidence" value="ECO:0007669"/>
    <property type="project" value="TreeGrafter"/>
</dbReference>
<dbReference type="GO" id="GO:0051537">
    <property type="term" value="F:2 iron, 2 sulfur cluster binding"/>
    <property type="evidence" value="ECO:0007669"/>
    <property type="project" value="UniProtKB-UniRule"/>
</dbReference>
<dbReference type="GO" id="GO:0004160">
    <property type="term" value="F:dihydroxy-acid dehydratase activity"/>
    <property type="evidence" value="ECO:0007669"/>
    <property type="project" value="UniProtKB-UniRule"/>
</dbReference>
<dbReference type="GO" id="GO:0000287">
    <property type="term" value="F:magnesium ion binding"/>
    <property type="evidence" value="ECO:0007669"/>
    <property type="project" value="UniProtKB-UniRule"/>
</dbReference>
<dbReference type="GO" id="GO:0009097">
    <property type="term" value="P:isoleucine biosynthetic process"/>
    <property type="evidence" value="ECO:0007669"/>
    <property type="project" value="UniProtKB-UniRule"/>
</dbReference>
<dbReference type="GO" id="GO:0009099">
    <property type="term" value="P:L-valine biosynthetic process"/>
    <property type="evidence" value="ECO:0007669"/>
    <property type="project" value="UniProtKB-UniRule"/>
</dbReference>
<dbReference type="FunFam" id="3.50.30.80:FF:000001">
    <property type="entry name" value="Dihydroxy-acid dehydratase"/>
    <property type="match status" value="1"/>
</dbReference>
<dbReference type="Gene3D" id="3.50.30.80">
    <property type="entry name" value="IlvD/EDD C-terminal domain-like"/>
    <property type="match status" value="1"/>
</dbReference>
<dbReference type="HAMAP" id="MF_00012">
    <property type="entry name" value="IlvD"/>
    <property type="match status" value="1"/>
</dbReference>
<dbReference type="InterPro" id="IPR042096">
    <property type="entry name" value="Dihydro-acid_dehy_C"/>
</dbReference>
<dbReference type="InterPro" id="IPR004404">
    <property type="entry name" value="DihydroxyA_deHydtase"/>
</dbReference>
<dbReference type="InterPro" id="IPR020558">
    <property type="entry name" value="DiOHA_6PGluconate_deHydtase_CS"/>
</dbReference>
<dbReference type="InterPro" id="IPR056740">
    <property type="entry name" value="ILV_EDD_C"/>
</dbReference>
<dbReference type="InterPro" id="IPR000581">
    <property type="entry name" value="ILV_EDD_N"/>
</dbReference>
<dbReference type="InterPro" id="IPR037237">
    <property type="entry name" value="IlvD/EDD_N"/>
</dbReference>
<dbReference type="NCBIfam" id="TIGR00110">
    <property type="entry name" value="ilvD"/>
    <property type="match status" value="1"/>
</dbReference>
<dbReference type="NCBIfam" id="NF002068">
    <property type="entry name" value="PRK00911.1"/>
    <property type="match status" value="1"/>
</dbReference>
<dbReference type="PANTHER" id="PTHR43661">
    <property type="entry name" value="D-XYLONATE DEHYDRATASE"/>
    <property type="match status" value="1"/>
</dbReference>
<dbReference type="PANTHER" id="PTHR43661:SF3">
    <property type="entry name" value="D-XYLONATE DEHYDRATASE YAGF-RELATED"/>
    <property type="match status" value="1"/>
</dbReference>
<dbReference type="Pfam" id="PF24877">
    <property type="entry name" value="ILV_EDD_C"/>
    <property type="match status" value="1"/>
</dbReference>
<dbReference type="Pfam" id="PF00920">
    <property type="entry name" value="ILVD_EDD_N"/>
    <property type="match status" value="1"/>
</dbReference>
<dbReference type="SUPFAM" id="SSF143975">
    <property type="entry name" value="IlvD/EDD N-terminal domain-like"/>
    <property type="match status" value="1"/>
</dbReference>
<dbReference type="SUPFAM" id="SSF52016">
    <property type="entry name" value="LeuD/IlvD-like"/>
    <property type="match status" value="1"/>
</dbReference>
<dbReference type="PROSITE" id="PS00886">
    <property type="entry name" value="ILVD_EDD_1"/>
    <property type="match status" value="1"/>
</dbReference>
<dbReference type="PROSITE" id="PS00887">
    <property type="entry name" value="ILVD_EDD_2"/>
    <property type="match status" value="1"/>
</dbReference>
<accession>A5IUJ9</accession>
<evidence type="ECO:0000255" key="1">
    <source>
        <dbReference type="HAMAP-Rule" id="MF_00012"/>
    </source>
</evidence>
<sequence>MRSDMIKKGDHQAPARSLLHATGALKSPTDMNKPFVAICNSYIDIVPGHVHLRELADIAKEAIREAGAIPFEFNTIGVDDGIAMGHIGMRYSLPSREIIADAAETVINAHWFDGVFYIPNCDKITPGMILAAMRTNVPAIFCSGGPMKAGLSAHGKALTLSSMFEAVGAFKEGSISKEEFLDMEQNACPTCGSCAGMFTANSMNCLMEVLGLALPYNGTALAVSDQRREMIRQAAFKLVENIKNDLKPRDIVTREAIDDAFALDMAMGGSTNTVLHTLAIANEAGIDYDLERINAIAKRTPYLSKIAPSSSYSMHDVHEAGGVPAIINELMKKDGTLHPDRITVTGKTLRENNEGKEIKNFDVIHPLDAPYDAQGGLSILFGNIAPKGAVIKVGGVDPSIKTFTGKAICFNSHDEAVEAIDNRTVRAGHVVVIRYEGPKGGPGMPEMLAPTSSIVGRGLGKDVALITDGRFSGATRGIAVGHISPEAASGGPIALIEDGDEITIDLTNRTLNVNQPEDVLARRRESLTPFKAKVKTGYLARYTALVTSANTGGVMQVPENLI</sequence>
<name>ILVD_STAA9</name>
<reference key="1">
    <citation type="submission" date="2007-05" db="EMBL/GenBank/DDBJ databases">
        <title>Complete sequence of chromosome of Staphylococcus aureus subsp. aureus JH9.</title>
        <authorList>
            <consortium name="US DOE Joint Genome Institute"/>
            <person name="Copeland A."/>
            <person name="Lucas S."/>
            <person name="Lapidus A."/>
            <person name="Barry K."/>
            <person name="Detter J.C."/>
            <person name="Glavina del Rio T."/>
            <person name="Hammon N."/>
            <person name="Israni S."/>
            <person name="Pitluck S."/>
            <person name="Chain P."/>
            <person name="Malfatti S."/>
            <person name="Shin M."/>
            <person name="Vergez L."/>
            <person name="Schmutz J."/>
            <person name="Larimer F."/>
            <person name="Land M."/>
            <person name="Hauser L."/>
            <person name="Kyrpides N."/>
            <person name="Kim E."/>
            <person name="Tomasz A."/>
            <person name="Richardson P."/>
        </authorList>
    </citation>
    <scope>NUCLEOTIDE SEQUENCE [LARGE SCALE GENOMIC DNA]</scope>
    <source>
        <strain>JH9</strain>
    </source>
</reference>
<proteinExistence type="inferred from homology"/>